<protein>
    <recommendedName>
        <fullName evidence="1">SsrA-binding protein</fullName>
    </recommendedName>
    <alternativeName>
        <fullName evidence="1">Small protein B</fullName>
    </alternativeName>
</protein>
<comment type="function">
    <text evidence="1">Required for rescue of stalled ribosomes mediated by trans-translation. Binds to transfer-messenger RNA (tmRNA), required for stable association of tmRNA with ribosomes. tmRNA and SmpB together mimic tRNA shape, replacing the anticodon stem-loop with SmpB. tmRNA is encoded by the ssrA gene; the 2 termini fold to resemble tRNA(Ala) and it encodes a 'tag peptide', a short internal open reading frame. During trans-translation Ala-aminoacylated tmRNA acts like a tRNA, entering the A-site of stalled ribosomes, displacing the stalled mRNA. The ribosome then switches to translate the ORF on the tmRNA; the nascent peptide is terminated with the 'tag peptide' encoded by the tmRNA and targeted for degradation. The ribosome is freed to recommence translation, which seems to be the essential function of trans-translation.</text>
</comment>
<comment type="subcellular location">
    <subcellularLocation>
        <location evidence="1">Cytoplasm</location>
    </subcellularLocation>
    <text evidence="1">The tmRNA-SmpB complex associates with stalled 70S ribosomes.</text>
</comment>
<comment type="similarity">
    <text evidence="1">Belongs to the SmpB family.</text>
</comment>
<keyword id="KW-0963">Cytoplasm</keyword>
<keyword id="KW-1185">Reference proteome</keyword>
<keyword id="KW-0694">RNA-binding</keyword>
<dbReference type="EMBL" id="CP000698">
    <property type="protein sequence ID" value="ABQ26273.1"/>
    <property type="molecule type" value="Genomic_DNA"/>
</dbReference>
<dbReference type="RefSeq" id="WP_011938975.1">
    <property type="nucleotide sequence ID" value="NC_009483.1"/>
</dbReference>
<dbReference type="SMR" id="A5G3A5"/>
<dbReference type="STRING" id="351605.Gura_2083"/>
<dbReference type="KEGG" id="gur:Gura_2083"/>
<dbReference type="HOGENOM" id="CLU_108953_0_1_7"/>
<dbReference type="OrthoDB" id="9805462at2"/>
<dbReference type="Proteomes" id="UP000006695">
    <property type="component" value="Chromosome"/>
</dbReference>
<dbReference type="GO" id="GO:0005829">
    <property type="term" value="C:cytosol"/>
    <property type="evidence" value="ECO:0007669"/>
    <property type="project" value="TreeGrafter"/>
</dbReference>
<dbReference type="GO" id="GO:0003723">
    <property type="term" value="F:RNA binding"/>
    <property type="evidence" value="ECO:0007669"/>
    <property type="project" value="UniProtKB-UniRule"/>
</dbReference>
<dbReference type="GO" id="GO:0070929">
    <property type="term" value="P:trans-translation"/>
    <property type="evidence" value="ECO:0007669"/>
    <property type="project" value="UniProtKB-UniRule"/>
</dbReference>
<dbReference type="CDD" id="cd09294">
    <property type="entry name" value="SmpB"/>
    <property type="match status" value="1"/>
</dbReference>
<dbReference type="Gene3D" id="2.40.280.10">
    <property type="match status" value="1"/>
</dbReference>
<dbReference type="HAMAP" id="MF_00023">
    <property type="entry name" value="SmpB"/>
    <property type="match status" value="1"/>
</dbReference>
<dbReference type="InterPro" id="IPR023620">
    <property type="entry name" value="SmpB"/>
</dbReference>
<dbReference type="InterPro" id="IPR000037">
    <property type="entry name" value="SsrA-bd_prot"/>
</dbReference>
<dbReference type="InterPro" id="IPR020081">
    <property type="entry name" value="SsrA-bd_prot_CS"/>
</dbReference>
<dbReference type="NCBIfam" id="NF003843">
    <property type="entry name" value="PRK05422.1"/>
    <property type="match status" value="1"/>
</dbReference>
<dbReference type="NCBIfam" id="TIGR00086">
    <property type="entry name" value="smpB"/>
    <property type="match status" value="1"/>
</dbReference>
<dbReference type="PANTHER" id="PTHR30308:SF2">
    <property type="entry name" value="SSRA-BINDING PROTEIN"/>
    <property type="match status" value="1"/>
</dbReference>
<dbReference type="PANTHER" id="PTHR30308">
    <property type="entry name" value="TMRNA-BINDING COMPONENT OF TRANS-TRANSLATION TAGGING COMPLEX"/>
    <property type="match status" value="1"/>
</dbReference>
<dbReference type="Pfam" id="PF01668">
    <property type="entry name" value="SmpB"/>
    <property type="match status" value="1"/>
</dbReference>
<dbReference type="SUPFAM" id="SSF74982">
    <property type="entry name" value="Small protein B (SmpB)"/>
    <property type="match status" value="1"/>
</dbReference>
<dbReference type="PROSITE" id="PS01317">
    <property type="entry name" value="SSRP"/>
    <property type="match status" value="1"/>
</dbReference>
<evidence type="ECO:0000255" key="1">
    <source>
        <dbReference type="HAMAP-Rule" id="MF_00023"/>
    </source>
</evidence>
<gene>
    <name evidence="1" type="primary">smpB</name>
    <name type="ordered locus">Gura_2083</name>
</gene>
<organism>
    <name type="scientific">Geotalea uraniireducens (strain Rf4)</name>
    <name type="common">Geobacter uraniireducens</name>
    <dbReference type="NCBI Taxonomy" id="351605"/>
    <lineage>
        <taxon>Bacteria</taxon>
        <taxon>Pseudomonadati</taxon>
        <taxon>Thermodesulfobacteriota</taxon>
        <taxon>Desulfuromonadia</taxon>
        <taxon>Geobacterales</taxon>
        <taxon>Geobacteraceae</taxon>
        <taxon>Geotalea</taxon>
    </lineage>
</organism>
<reference key="1">
    <citation type="submission" date="2007-05" db="EMBL/GenBank/DDBJ databases">
        <title>Complete sequence of Geobacter uraniireducens Rf4.</title>
        <authorList>
            <consortium name="US DOE Joint Genome Institute"/>
            <person name="Copeland A."/>
            <person name="Lucas S."/>
            <person name="Lapidus A."/>
            <person name="Barry K."/>
            <person name="Detter J.C."/>
            <person name="Glavina del Rio T."/>
            <person name="Hammon N."/>
            <person name="Israni S."/>
            <person name="Dalin E."/>
            <person name="Tice H."/>
            <person name="Pitluck S."/>
            <person name="Chertkov O."/>
            <person name="Brettin T."/>
            <person name="Bruce D."/>
            <person name="Han C."/>
            <person name="Schmutz J."/>
            <person name="Larimer F."/>
            <person name="Land M."/>
            <person name="Hauser L."/>
            <person name="Kyrpides N."/>
            <person name="Mikhailova N."/>
            <person name="Shelobolina E."/>
            <person name="Aklujkar M."/>
            <person name="Lovley D."/>
            <person name="Richardson P."/>
        </authorList>
    </citation>
    <scope>NUCLEOTIDE SEQUENCE [LARGE SCALE GENOMIC DNA]</scope>
    <source>
        <strain>ATCC BAA-1134 / JCM 13001 / Rf4</strain>
    </source>
</reference>
<accession>A5G3A5</accession>
<sequence>MSEKLICNNKKAYHDYFIEEKFEAGMVLKGTEVKSLRIGKANLNDSFALVKNGEAFLHNLHISPYDFGNRENHDPDRMRKLLLHKKEIGKLFSMIREQGYTVVPLRLYFKDGLVKVEVGLAKGKKLYDKREDMKKKDMRRDVAVALKERNR</sequence>
<name>SSRP_GEOUR</name>
<proteinExistence type="inferred from homology"/>
<feature type="chain" id="PRO_1000074353" description="SsrA-binding protein">
    <location>
        <begin position="1"/>
        <end position="151"/>
    </location>
</feature>